<feature type="chain" id="PRO_0000097951" description="Sec-independent protein translocase protein TatA">
    <location>
        <begin position="1"/>
        <end position="57"/>
    </location>
</feature>
<feature type="transmembrane region" description="Helical" evidence="1">
    <location>
        <begin position="1"/>
        <end position="21"/>
    </location>
</feature>
<feature type="region of interest" description="Disordered" evidence="2">
    <location>
        <begin position="37"/>
        <end position="57"/>
    </location>
</feature>
<feature type="compositionally biased region" description="Polar residues" evidence="2">
    <location>
        <begin position="44"/>
        <end position="57"/>
    </location>
</feature>
<reference key="1">
    <citation type="journal article" date="1996" name="Biochim. Biophys. Acta">
        <title>Sequence analysis of an internal 9.72-kb segment from the 30-kb denitrification gene cluster of Pseudomonas stutzeri.</title>
        <authorList>
            <person name="Glockner A.B."/>
            <person name="Zumft W.G."/>
        </authorList>
    </citation>
    <scope>NUCLEOTIDE SEQUENCE [GENOMIC DNA]</scope>
    <source>
        <strain>ATCC 14405 / JCM 20778 / CIP 107696 / IAM 12931 / LMG 2243 / NCIMB 568 / Baumann 218 / ZoBell 632</strain>
    </source>
</reference>
<gene>
    <name evidence="1" type="primary">tatA</name>
</gene>
<organism>
    <name type="scientific">Stutzerimonas stutzeri</name>
    <name type="common">Pseudomonas stutzeri</name>
    <dbReference type="NCBI Taxonomy" id="316"/>
    <lineage>
        <taxon>Bacteria</taxon>
        <taxon>Pseudomonadati</taxon>
        <taxon>Pseudomonadota</taxon>
        <taxon>Gammaproteobacteria</taxon>
        <taxon>Pseudomonadales</taxon>
        <taxon>Pseudomonadaceae</taxon>
        <taxon>Stutzerimonas</taxon>
    </lineage>
</organism>
<proteinExistence type="inferred from homology"/>
<name>TATA_STUST</name>
<comment type="function">
    <text evidence="1">Part of the twin-arginine translocation (Tat) system that transports large folded proteins containing a characteristic twin-arginine motif in their signal peptide across membranes. TatA could form the protein-conducting channel of the Tat system.</text>
</comment>
<comment type="subunit">
    <text evidence="1">The Tat system comprises two distinct complexes: a TatABC complex, containing multiple copies of TatA, TatB and TatC subunits, and a separate TatA complex, containing only TatA subunits. Substrates initially bind to the TatABC complex, which probably triggers association of the separate TatA complex to form the active translocon.</text>
</comment>
<comment type="subcellular location">
    <subcellularLocation>
        <location evidence="1">Cell inner membrane</location>
        <topology evidence="1">Single-pass membrane protein</topology>
    </subcellularLocation>
</comment>
<comment type="similarity">
    <text evidence="1">Belongs to the TatA/E family.</text>
</comment>
<accession>P95557</accession>
<dbReference type="EMBL" id="X53676">
    <property type="protein sequence ID" value="CAA98158.1"/>
    <property type="molecule type" value="Genomic_DNA"/>
</dbReference>
<dbReference type="SMR" id="P95557"/>
<dbReference type="GO" id="GO:0033281">
    <property type="term" value="C:TAT protein transport complex"/>
    <property type="evidence" value="ECO:0007669"/>
    <property type="project" value="UniProtKB-UniRule"/>
</dbReference>
<dbReference type="GO" id="GO:0008320">
    <property type="term" value="F:protein transmembrane transporter activity"/>
    <property type="evidence" value="ECO:0007669"/>
    <property type="project" value="UniProtKB-UniRule"/>
</dbReference>
<dbReference type="GO" id="GO:0043953">
    <property type="term" value="P:protein transport by the Tat complex"/>
    <property type="evidence" value="ECO:0007669"/>
    <property type="project" value="UniProtKB-UniRule"/>
</dbReference>
<dbReference type="Gene3D" id="1.20.5.3310">
    <property type="match status" value="1"/>
</dbReference>
<dbReference type="HAMAP" id="MF_00236">
    <property type="entry name" value="TatA_E"/>
    <property type="match status" value="1"/>
</dbReference>
<dbReference type="InterPro" id="IPR003369">
    <property type="entry name" value="TatA/B/E"/>
</dbReference>
<dbReference type="InterPro" id="IPR006312">
    <property type="entry name" value="TatA/E"/>
</dbReference>
<dbReference type="NCBIfam" id="TIGR01411">
    <property type="entry name" value="tatAE"/>
    <property type="match status" value="1"/>
</dbReference>
<dbReference type="PANTHER" id="PTHR42982">
    <property type="entry name" value="SEC-INDEPENDENT PROTEIN TRANSLOCASE PROTEIN TATA"/>
    <property type="match status" value="1"/>
</dbReference>
<dbReference type="PANTHER" id="PTHR42982:SF1">
    <property type="entry name" value="SEC-INDEPENDENT PROTEIN TRANSLOCASE PROTEIN TATA"/>
    <property type="match status" value="1"/>
</dbReference>
<dbReference type="Pfam" id="PF02416">
    <property type="entry name" value="TatA_B_E"/>
    <property type="match status" value="1"/>
</dbReference>
<evidence type="ECO:0000255" key="1">
    <source>
        <dbReference type="HAMAP-Rule" id="MF_00236"/>
    </source>
</evidence>
<evidence type="ECO:0000256" key="2">
    <source>
        <dbReference type="SAM" id="MobiDB-lite"/>
    </source>
</evidence>
<keyword id="KW-0997">Cell inner membrane</keyword>
<keyword id="KW-1003">Cell membrane</keyword>
<keyword id="KW-0472">Membrane</keyword>
<keyword id="KW-0653">Protein transport</keyword>
<keyword id="KW-0811">Translocation</keyword>
<keyword id="KW-0812">Transmembrane</keyword>
<keyword id="KW-1133">Transmembrane helix</keyword>
<keyword id="KW-0813">Transport</keyword>
<sequence length="57" mass="6082">MGISVWQLLIILLIVVMLFGTKRLRGLGSDLGSAINGFRKSVSDGETTTQAEASSRS</sequence>
<protein>
    <recommendedName>
        <fullName evidence="1">Sec-independent protein translocase protein TatA</fullName>
    </recommendedName>
</protein>